<protein>
    <recommendedName>
        <fullName evidence="1">Large ribosomal subunit protein uL15</fullName>
    </recommendedName>
    <alternativeName>
        <fullName evidence="3">50S ribosomal protein L15</fullName>
    </alternativeName>
</protein>
<reference key="1">
    <citation type="journal article" date="2007" name="PLoS Genet.">
        <title>The complete genome sequence of Yersinia pseudotuberculosis IP31758, the causative agent of Far East scarlet-like fever.</title>
        <authorList>
            <person name="Eppinger M."/>
            <person name="Rosovitz M.J."/>
            <person name="Fricke W.F."/>
            <person name="Rasko D.A."/>
            <person name="Kokorina G."/>
            <person name="Fayolle C."/>
            <person name="Lindler L.E."/>
            <person name="Carniel E."/>
            <person name="Ravel J."/>
        </authorList>
    </citation>
    <scope>NUCLEOTIDE SEQUENCE [LARGE SCALE GENOMIC DNA]</scope>
    <source>
        <strain>IP 31758</strain>
    </source>
</reference>
<keyword id="KW-0687">Ribonucleoprotein</keyword>
<keyword id="KW-0689">Ribosomal protein</keyword>
<keyword id="KW-0694">RNA-binding</keyword>
<keyword id="KW-0699">rRNA-binding</keyword>
<sequence>MRLNTLSPAEGAKHAPKRVGRGIGSGLGKTAGRGHKGQNSRSGGGVRRGFEGGQMPLYRRLPKFGFTSRKAMITAEVRLSELALVEGDVIDLNTLKAANVVGIQMEFVKVILSGEVNRAVTLRGLRVTKGARAAIEAAGGKIEE</sequence>
<name>RL15_YERP3</name>
<organism>
    <name type="scientific">Yersinia pseudotuberculosis serotype O:1b (strain IP 31758)</name>
    <dbReference type="NCBI Taxonomy" id="349747"/>
    <lineage>
        <taxon>Bacteria</taxon>
        <taxon>Pseudomonadati</taxon>
        <taxon>Pseudomonadota</taxon>
        <taxon>Gammaproteobacteria</taxon>
        <taxon>Enterobacterales</taxon>
        <taxon>Yersiniaceae</taxon>
        <taxon>Yersinia</taxon>
    </lineage>
</organism>
<comment type="function">
    <text evidence="1">Binds to the 23S rRNA.</text>
</comment>
<comment type="subunit">
    <text evidence="1">Part of the 50S ribosomal subunit.</text>
</comment>
<comment type="similarity">
    <text evidence="1">Belongs to the universal ribosomal protein uL15 family.</text>
</comment>
<gene>
    <name evidence="1" type="primary">rplO</name>
    <name type="ordered locus">YpsIP31758_3895</name>
</gene>
<dbReference type="EMBL" id="CP000720">
    <property type="protein sequence ID" value="ABS47894.1"/>
    <property type="molecule type" value="Genomic_DNA"/>
</dbReference>
<dbReference type="RefSeq" id="WP_002213341.1">
    <property type="nucleotide sequence ID" value="NC_009708.1"/>
</dbReference>
<dbReference type="SMR" id="A7FNL5"/>
<dbReference type="GeneID" id="96663177"/>
<dbReference type="KEGG" id="ypi:YpsIP31758_3895"/>
<dbReference type="HOGENOM" id="CLU_055188_4_2_6"/>
<dbReference type="Proteomes" id="UP000002412">
    <property type="component" value="Chromosome"/>
</dbReference>
<dbReference type="GO" id="GO:0022625">
    <property type="term" value="C:cytosolic large ribosomal subunit"/>
    <property type="evidence" value="ECO:0007669"/>
    <property type="project" value="TreeGrafter"/>
</dbReference>
<dbReference type="GO" id="GO:0019843">
    <property type="term" value="F:rRNA binding"/>
    <property type="evidence" value="ECO:0007669"/>
    <property type="project" value="UniProtKB-UniRule"/>
</dbReference>
<dbReference type="GO" id="GO:0003735">
    <property type="term" value="F:structural constituent of ribosome"/>
    <property type="evidence" value="ECO:0007669"/>
    <property type="project" value="InterPro"/>
</dbReference>
<dbReference type="GO" id="GO:0006412">
    <property type="term" value="P:translation"/>
    <property type="evidence" value="ECO:0007669"/>
    <property type="project" value="UniProtKB-UniRule"/>
</dbReference>
<dbReference type="FunFam" id="3.100.10.10:FF:000003">
    <property type="entry name" value="50S ribosomal protein L15"/>
    <property type="match status" value="1"/>
</dbReference>
<dbReference type="Gene3D" id="3.100.10.10">
    <property type="match status" value="1"/>
</dbReference>
<dbReference type="HAMAP" id="MF_01341">
    <property type="entry name" value="Ribosomal_uL15"/>
    <property type="match status" value="1"/>
</dbReference>
<dbReference type="InterPro" id="IPR030878">
    <property type="entry name" value="Ribosomal_uL15"/>
</dbReference>
<dbReference type="InterPro" id="IPR021131">
    <property type="entry name" value="Ribosomal_uL15/eL18"/>
</dbReference>
<dbReference type="InterPro" id="IPR036227">
    <property type="entry name" value="Ribosomal_uL15/eL18_sf"/>
</dbReference>
<dbReference type="InterPro" id="IPR005749">
    <property type="entry name" value="Ribosomal_uL15_bac-type"/>
</dbReference>
<dbReference type="InterPro" id="IPR001196">
    <property type="entry name" value="Ribosomal_uL15_CS"/>
</dbReference>
<dbReference type="NCBIfam" id="TIGR01071">
    <property type="entry name" value="rplO_bact"/>
    <property type="match status" value="1"/>
</dbReference>
<dbReference type="PANTHER" id="PTHR12934">
    <property type="entry name" value="50S RIBOSOMAL PROTEIN L15"/>
    <property type="match status" value="1"/>
</dbReference>
<dbReference type="PANTHER" id="PTHR12934:SF11">
    <property type="entry name" value="LARGE RIBOSOMAL SUBUNIT PROTEIN UL15M"/>
    <property type="match status" value="1"/>
</dbReference>
<dbReference type="Pfam" id="PF00828">
    <property type="entry name" value="Ribosomal_L27A"/>
    <property type="match status" value="1"/>
</dbReference>
<dbReference type="SUPFAM" id="SSF52080">
    <property type="entry name" value="Ribosomal proteins L15p and L18e"/>
    <property type="match status" value="1"/>
</dbReference>
<dbReference type="PROSITE" id="PS00475">
    <property type="entry name" value="RIBOSOMAL_L15"/>
    <property type="match status" value="1"/>
</dbReference>
<proteinExistence type="inferred from homology"/>
<evidence type="ECO:0000255" key="1">
    <source>
        <dbReference type="HAMAP-Rule" id="MF_01341"/>
    </source>
</evidence>
<evidence type="ECO:0000256" key="2">
    <source>
        <dbReference type="SAM" id="MobiDB-lite"/>
    </source>
</evidence>
<evidence type="ECO:0000305" key="3"/>
<feature type="chain" id="PRO_1000067671" description="Large ribosomal subunit protein uL15">
    <location>
        <begin position="1"/>
        <end position="144"/>
    </location>
</feature>
<feature type="region of interest" description="Disordered" evidence="2">
    <location>
        <begin position="1"/>
        <end position="52"/>
    </location>
</feature>
<feature type="compositionally biased region" description="Gly residues" evidence="2">
    <location>
        <begin position="21"/>
        <end position="31"/>
    </location>
</feature>
<accession>A7FNL5</accession>